<sequence>MARYTGPVTRKSRRLGVDLVGGDQSFEKRPYPPGQHGRARIKESEYRTQLQEKQKARFTYGVMEKQFRRYYEEANRLPGKTGDNLLRILESRLDNVVYRAGLARTRRMARQLVSHGHFTVNGVKVDVPSYRVSQYDIIDVKDKSINTLPFEVARQTAGERPIPGWLQVVGERQRILVHQLPERAQIDVPLTEQLIVELYSK</sequence>
<keyword id="KW-0687">Ribonucleoprotein</keyword>
<keyword id="KW-0689">Ribosomal protein</keyword>
<keyword id="KW-0694">RNA-binding</keyword>
<keyword id="KW-0699">rRNA-binding</keyword>
<accession>A4TEJ4</accession>
<protein>
    <recommendedName>
        <fullName evidence="1">Small ribosomal subunit protein uS4</fullName>
    </recommendedName>
    <alternativeName>
        <fullName evidence="2">30S ribosomal protein S4</fullName>
    </alternativeName>
</protein>
<proteinExistence type="inferred from homology"/>
<organism>
    <name type="scientific">Mycolicibacterium gilvum (strain PYR-GCK)</name>
    <name type="common">Mycobacterium gilvum (strain PYR-GCK)</name>
    <dbReference type="NCBI Taxonomy" id="350054"/>
    <lineage>
        <taxon>Bacteria</taxon>
        <taxon>Bacillati</taxon>
        <taxon>Actinomycetota</taxon>
        <taxon>Actinomycetes</taxon>
        <taxon>Mycobacteriales</taxon>
        <taxon>Mycobacteriaceae</taxon>
        <taxon>Mycolicibacterium</taxon>
    </lineage>
</organism>
<gene>
    <name evidence="1" type="primary">rpsD</name>
    <name type="ordered locus">Mflv_4971</name>
</gene>
<name>RS4_MYCGI</name>
<comment type="function">
    <text evidence="1">One of the primary rRNA binding proteins, it binds directly to 16S rRNA where it nucleates assembly of the body of the 30S subunit.</text>
</comment>
<comment type="function">
    <text evidence="1">With S5 and S12 plays an important role in translational accuracy.</text>
</comment>
<comment type="subunit">
    <text evidence="1">Part of the 30S ribosomal subunit. Contacts protein S5. The interaction surface between S4 and S5 is involved in control of translational fidelity.</text>
</comment>
<comment type="similarity">
    <text evidence="1">Belongs to the universal ribosomal protein uS4 family.</text>
</comment>
<evidence type="ECO:0000255" key="1">
    <source>
        <dbReference type="HAMAP-Rule" id="MF_01306"/>
    </source>
</evidence>
<evidence type="ECO:0000305" key="2"/>
<reference key="1">
    <citation type="submission" date="2007-04" db="EMBL/GenBank/DDBJ databases">
        <title>Complete sequence of chromosome of Mycobacterium gilvum PYR-GCK.</title>
        <authorList>
            <consortium name="US DOE Joint Genome Institute"/>
            <person name="Copeland A."/>
            <person name="Lucas S."/>
            <person name="Lapidus A."/>
            <person name="Barry K."/>
            <person name="Detter J.C."/>
            <person name="Glavina del Rio T."/>
            <person name="Hammon N."/>
            <person name="Israni S."/>
            <person name="Dalin E."/>
            <person name="Tice H."/>
            <person name="Pitluck S."/>
            <person name="Chain P."/>
            <person name="Malfatti S."/>
            <person name="Shin M."/>
            <person name="Vergez L."/>
            <person name="Schmutz J."/>
            <person name="Larimer F."/>
            <person name="Land M."/>
            <person name="Hauser L."/>
            <person name="Kyrpides N."/>
            <person name="Mikhailova N."/>
            <person name="Miller C."/>
            <person name="Richardson P."/>
        </authorList>
    </citation>
    <scope>NUCLEOTIDE SEQUENCE [LARGE SCALE GENOMIC DNA]</scope>
    <source>
        <strain>PYR-GCK</strain>
    </source>
</reference>
<feature type="chain" id="PRO_1000085980" description="Small ribosomal subunit protein uS4">
    <location>
        <begin position="1"/>
        <end position="201"/>
    </location>
</feature>
<feature type="domain" description="S4 RNA-binding" evidence="1">
    <location>
        <begin position="91"/>
        <end position="151"/>
    </location>
</feature>
<dbReference type="EMBL" id="CP000656">
    <property type="protein sequence ID" value="ABP47437.1"/>
    <property type="molecule type" value="Genomic_DNA"/>
</dbReference>
<dbReference type="SMR" id="A4TEJ4"/>
<dbReference type="STRING" id="350054.Mflv_4971"/>
<dbReference type="KEGG" id="mgi:Mflv_4971"/>
<dbReference type="eggNOG" id="COG0522">
    <property type="taxonomic scope" value="Bacteria"/>
</dbReference>
<dbReference type="HOGENOM" id="CLU_092403_0_2_11"/>
<dbReference type="OrthoDB" id="9803672at2"/>
<dbReference type="GO" id="GO:0015935">
    <property type="term" value="C:small ribosomal subunit"/>
    <property type="evidence" value="ECO:0007669"/>
    <property type="project" value="InterPro"/>
</dbReference>
<dbReference type="GO" id="GO:0019843">
    <property type="term" value="F:rRNA binding"/>
    <property type="evidence" value="ECO:0007669"/>
    <property type="project" value="UniProtKB-UniRule"/>
</dbReference>
<dbReference type="GO" id="GO:0003735">
    <property type="term" value="F:structural constituent of ribosome"/>
    <property type="evidence" value="ECO:0007669"/>
    <property type="project" value="InterPro"/>
</dbReference>
<dbReference type="GO" id="GO:0042274">
    <property type="term" value="P:ribosomal small subunit biogenesis"/>
    <property type="evidence" value="ECO:0007669"/>
    <property type="project" value="TreeGrafter"/>
</dbReference>
<dbReference type="GO" id="GO:0006412">
    <property type="term" value="P:translation"/>
    <property type="evidence" value="ECO:0007669"/>
    <property type="project" value="UniProtKB-UniRule"/>
</dbReference>
<dbReference type="CDD" id="cd00165">
    <property type="entry name" value="S4"/>
    <property type="match status" value="1"/>
</dbReference>
<dbReference type="FunFam" id="1.10.1050.10:FF:000001">
    <property type="entry name" value="30S ribosomal protein S4"/>
    <property type="match status" value="1"/>
</dbReference>
<dbReference type="FunFam" id="3.10.290.10:FF:000001">
    <property type="entry name" value="30S ribosomal protein S4"/>
    <property type="match status" value="1"/>
</dbReference>
<dbReference type="Gene3D" id="1.10.1050.10">
    <property type="entry name" value="Ribosomal Protein S4 Delta 41, Chain A, domain 1"/>
    <property type="match status" value="1"/>
</dbReference>
<dbReference type="Gene3D" id="3.10.290.10">
    <property type="entry name" value="RNA-binding S4 domain"/>
    <property type="match status" value="1"/>
</dbReference>
<dbReference type="HAMAP" id="MF_01306_B">
    <property type="entry name" value="Ribosomal_uS4_B"/>
    <property type="match status" value="1"/>
</dbReference>
<dbReference type="InterPro" id="IPR022801">
    <property type="entry name" value="Ribosomal_uS4"/>
</dbReference>
<dbReference type="InterPro" id="IPR005709">
    <property type="entry name" value="Ribosomal_uS4_bac-type"/>
</dbReference>
<dbReference type="InterPro" id="IPR018079">
    <property type="entry name" value="Ribosomal_uS4_CS"/>
</dbReference>
<dbReference type="InterPro" id="IPR001912">
    <property type="entry name" value="Ribosomal_uS4_N"/>
</dbReference>
<dbReference type="InterPro" id="IPR002942">
    <property type="entry name" value="S4_RNA-bd"/>
</dbReference>
<dbReference type="InterPro" id="IPR036986">
    <property type="entry name" value="S4_RNA-bd_sf"/>
</dbReference>
<dbReference type="NCBIfam" id="NF003717">
    <property type="entry name" value="PRK05327.1"/>
    <property type="match status" value="1"/>
</dbReference>
<dbReference type="NCBIfam" id="TIGR01017">
    <property type="entry name" value="rpsD_bact"/>
    <property type="match status" value="1"/>
</dbReference>
<dbReference type="PANTHER" id="PTHR11831">
    <property type="entry name" value="30S 40S RIBOSOMAL PROTEIN"/>
    <property type="match status" value="1"/>
</dbReference>
<dbReference type="PANTHER" id="PTHR11831:SF4">
    <property type="entry name" value="SMALL RIBOSOMAL SUBUNIT PROTEIN US4M"/>
    <property type="match status" value="1"/>
</dbReference>
<dbReference type="Pfam" id="PF00163">
    <property type="entry name" value="Ribosomal_S4"/>
    <property type="match status" value="1"/>
</dbReference>
<dbReference type="Pfam" id="PF01479">
    <property type="entry name" value="S4"/>
    <property type="match status" value="1"/>
</dbReference>
<dbReference type="SMART" id="SM01390">
    <property type="entry name" value="Ribosomal_S4"/>
    <property type="match status" value="1"/>
</dbReference>
<dbReference type="SMART" id="SM00363">
    <property type="entry name" value="S4"/>
    <property type="match status" value="1"/>
</dbReference>
<dbReference type="SUPFAM" id="SSF55174">
    <property type="entry name" value="Alpha-L RNA-binding motif"/>
    <property type="match status" value="1"/>
</dbReference>
<dbReference type="PROSITE" id="PS00632">
    <property type="entry name" value="RIBOSOMAL_S4"/>
    <property type="match status" value="1"/>
</dbReference>
<dbReference type="PROSITE" id="PS50889">
    <property type="entry name" value="S4"/>
    <property type="match status" value="1"/>
</dbReference>